<name>MURD_YERPE</name>
<comment type="function">
    <text evidence="1">Cell wall formation. Catalyzes the addition of glutamate to the nucleotide precursor UDP-N-acetylmuramoyl-L-alanine (UMA).</text>
</comment>
<comment type="catalytic activity">
    <reaction evidence="1">
        <text>UDP-N-acetyl-alpha-D-muramoyl-L-alanine + D-glutamate + ATP = UDP-N-acetyl-alpha-D-muramoyl-L-alanyl-D-glutamate + ADP + phosphate + H(+)</text>
        <dbReference type="Rhea" id="RHEA:16429"/>
        <dbReference type="ChEBI" id="CHEBI:15378"/>
        <dbReference type="ChEBI" id="CHEBI:29986"/>
        <dbReference type="ChEBI" id="CHEBI:30616"/>
        <dbReference type="ChEBI" id="CHEBI:43474"/>
        <dbReference type="ChEBI" id="CHEBI:83898"/>
        <dbReference type="ChEBI" id="CHEBI:83900"/>
        <dbReference type="ChEBI" id="CHEBI:456216"/>
        <dbReference type="EC" id="6.3.2.9"/>
    </reaction>
</comment>
<comment type="pathway">
    <text evidence="1">Cell wall biogenesis; peptidoglycan biosynthesis.</text>
</comment>
<comment type="subcellular location">
    <subcellularLocation>
        <location evidence="1">Cytoplasm</location>
    </subcellularLocation>
</comment>
<comment type="similarity">
    <text evidence="1">Belongs to the MurCDEF family.</text>
</comment>
<gene>
    <name evidence="1" type="primary">murD</name>
    <name type="ordered locus">YPO0553</name>
    <name type="ordered locus">y3628</name>
    <name type="ordered locus">YP_3631</name>
</gene>
<keyword id="KW-0067">ATP-binding</keyword>
<keyword id="KW-0131">Cell cycle</keyword>
<keyword id="KW-0132">Cell division</keyword>
<keyword id="KW-0133">Cell shape</keyword>
<keyword id="KW-0961">Cell wall biogenesis/degradation</keyword>
<keyword id="KW-0963">Cytoplasm</keyword>
<keyword id="KW-0436">Ligase</keyword>
<keyword id="KW-0547">Nucleotide-binding</keyword>
<keyword id="KW-0573">Peptidoglycan synthesis</keyword>
<keyword id="KW-1185">Reference proteome</keyword>
<dbReference type="EC" id="6.3.2.9" evidence="1"/>
<dbReference type="EMBL" id="AL590842">
    <property type="protein sequence ID" value="CAL19232.1"/>
    <property type="molecule type" value="Genomic_DNA"/>
</dbReference>
<dbReference type="EMBL" id="AE009952">
    <property type="protein sequence ID" value="AAM87176.1"/>
    <property type="molecule type" value="Genomic_DNA"/>
</dbReference>
<dbReference type="EMBL" id="AE017042">
    <property type="protein sequence ID" value="AAS63779.1"/>
    <property type="molecule type" value="Genomic_DNA"/>
</dbReference>
<dbReference type="PIR" id="AF0068">
    <property type="entry name" value="AF0068"/>
</dbReference>
<dbReference type="RefSeq" id="WP_002210436.1">
    <property type="nucleotide sequence ID" value="NZ_WUCM01000081.1"/>
</dbReference>
<dbReference type="RefSeq" id="YP_002345624.1">
    <property type="nucleotide sequence ID" value="NC_003143.1"/>
</dbReference>
<dbReference type="SMR" id="Q8ZIF1"/>
<dbReference type="STRING" id="214092.YPO0553"/>
<dbReference type="PaxDb" id="214092-YPO0553"/>
<dbReference type="DNASU" id="1148575"/>
<dbReference type="EnsemblBacteria" id="AAS63779">
    <property type="protein sequence ID" value="AAS63779"/>
    <property type="gene ID" value="YP_3631"/>
</dbReference>
<dbReference type="GeneID" id="57974062"/>
<dbReference type="KEGG" id="ype:YPO0553"/>
<dbReference type="KEGG" id="ypk:y3628"/>
<dbReference type="KEGG" id="ypm:YP_3631"/>
<dbReference type="PATRIC" id="fig|214092.21.peg.806"/>
<dbReference type="eggNOG" id="COG0771">
    <property type="taxonomic scope" value="Bacteria"/>
</dbReference>
<dbReference type="HOGENOM" id="CLU_032540_1_0_6"/>
<dbReference type="OMA" id="CSSFDMF"/>
<dbReference type="OrthoDB" id="9809796at2"/>
<dbReference type="UniPathway" id="UPA00219"/>
<dbReference type="Proteomes" id="UP000000815">
    <property type="component" value="Chromosome"/>
</dbReference>
<dbReference type="Proteomes" id="UP000001019">
    <property type="component" value="Chromosome"/>
</dbReference>
<dbReference type="Proteomes" id="UP000002490">
    <property type="component" value="Chromosome"/>
</dbReference>
<dbReference type="GO" id="GO:0005737">
    <property type="term" value="C:cytoplasm"/>
    <property type="evidence" value="ECO:0007669"/>
    <property type="project" value="UniProtKB-SubCell"/>
</dbReference>
<dbReference type="GO" id="GO:0005524">
    <property type="term" value="F:ATP binding"/>
    <property type="evidence" value="ECO:0007669"/>
    <property type="project" value="UniProtKB-UniRule"/>
</dbReference>
<dbReference type="GO" id="GO:0008764">
    <property type="term" value="F:UDP-N-acetylmuramoylalanine-D-glutamate ligase activity"/>
    <property type="evidence" value="ECO:0007669"/>
    <property type="project" value="UniProtKB-UniRule"/>
</dbReference>
<dbReference type="GO" id="GO:0051301">
    <property type="term" value="P:cell division"/>
    <property type="evidence" value="ECO:0007669"/>
    <property type="project" value="UniProtKB-KW"/>
</dbReference>
<dbReference type="GO" id="GO:0071555">
    <property type="term" value="P:cell wall organization"/>
    <property type="evidence" value="ECO:0007669"/>
    <property type="project" value="UniProtKB-KW"/>
</dbReference>
<dbReference type="GO" id="GO:0009252">
    <property type="term" value="P:peptidoglycan biosynthetic process"/>
    <property type="evidence" value="ECO:0007669"/>
    <property type="project" value="UniProtKB-UniRule"/>
</dbReference>
<dbReference type="GO" id="GO:0008360">
    <property type="term" value="P:regulation of cell shape"/>
    <property type="evidence" value="ECO:0007669"/>
    <property type="project" value="UniProtKB-KW"/>
</dbReference>
<dbReference type="FunFam" id="3.40.1190.10:FF:000002">
    <property type="entry name" value="UDP-N-acetylmuramoylalanine--D-glutamate ligase"/>
    <property type="match status" value="1"/>
</dbReference>
<dbReference type="Gene3D" id="3.90.190.20">
    <property type="entry name" value="Mur ligase, C-terminal domain"/>
    <property type="match status" value="1"/>
</dbReference>
<dbReference type="Gene3D" id="3.40.1190.10">
    <property type="entry name" value="Mur-like, catalytic domain"/>
    <property type="match status" value="1"/>
</dbReference>
<dbReference type="Gene3D" id="3.40.50.720">
    <property type="entry name" value="NAD(P)-binding Rossmann-like Domain"/>
    <property type="match status" value="1"/>
</dbReference>
<dbReference type="HAMAP" id="MF_00639">
    <property type="entry name" value="MurD"/>
    <property type="match status" value="1"/>
</dbReference>
<dbReference type="InterPro" id="IPR036565">
    <property type="entry name" value="Mur-like_cat_sf"/>
</dbReference>
<dbReference type="InterPro" id="IPR004101">
    <property type="entry name" value="Mur_ligase_C"/>
</dbReference>
<dbReference type="InterPro" id="IPR036615">
    <property type="entry name" value="Mur_ligase_C_dom_sf"/>
</dbReference>
<dbReference type="InterPro" id="IPR013221">
    <property type="entry name" value="Mur_ligase_cen"/>
</dbReference>
<dbReference type="InterPro" id="IPR005762">
    <property type="entry name" value="MurD"/>
</dbReference>
<dbReference type="NCBIfam" id="TIGR01087">
    <property type="entry name" value="murD"/>
    <property type="match status" value="1"/>
</dbReference>
<dbReference type="PANTHER" id="PTHR43692">
    <property type="entry name" value="UDP-N-ACETYLMURAMOYLALANINE--D-GLUTAMATE LIGASE"/>
    <property type="match status" value="1"/>
</dbReference>
<dbReference type="PANTHER" id="PTHR43692:SF1">
    <property type="entry name" value="UDP-N-ACETYLMURAMOYLALANINE--D-GLUTAMATE LIGASE"/>
    <property type="match status" value="1"/>
</dbReference>
<dbReference type="Pfam" id="PF02875">
    <property type="entry name" value="Mur_ligase_C"/>
    <property type="match status" value="1"/>
</dbReference>
<dbReference type="Pfam" id="PF08245">
    <property type="entry name" value="Mur_ligase_M"/>
    <property type="match status" value="1"/>
</dbReference>
<dbReference type="Pfam" id="PF21799">
    <property type="entry name" value="MurD-like_N"/>
    <property type="match status" value="1"/>
</dbReference>
<dbReference type="SUPFAM" id="SSF51984">
    <property type="entry name" value="MurCD N-terminal domain"/>
    <property type="match status" value="1"/>
</dbReference>
<dbReference type="SUPFAM" id="SSF53623">
    <property type="entry name" value="MurD-like peptide ligases, catalytic domain"/>
    <property type="match status" value="1"/>
</dbReference>
<dbReference type="SUPFAM" id="SSF53244">
    <property type="entry name" value="MurD-like peptide ligases, peptide-binding domain"/>
    <property type="match status" value="1"/>
</dbReference>
<feature type="chain" id="PRO_0000109132" description="UDP-N-acetylmuramoylalanine--D-glutamate ligase">
    <location>
        <begin position="1"/>
        <end position="438"/>
    </location>
</feature>
<feature type="binding site" evidence="1">
    <location>
        <begin position="112"/>
        <end position="118"/>
    </location>
    <ligand>
        <name>ATP</name>
        <dbReference type="ChEBI" id="CHEBI:30616"/>
    </ligand>
</feature>
<reference key="1">
    <citation type="journal article" date="2001" name="Nature">
        <title>Genome sequence of Yersinia pestis, the causative agent of plague.</title>
        <authorList>
            <person name="Parkhill J."/>
            <person name="Wren B.W."/>
            <person name="Thomson N.R."/>
            <person name="Titball R.W."/>
            <person name="Holden M.T.G."/>
            <person name="Prentice M.B."/>
            <person name="Sebaihia M."/>
            <person name="James K.D."/>
            <person name="Churcher C.M."/>
            <person name="Mungall K.L."/>
            <person name="Baker S."/>
            <person name="Basham D."/>
            <person name="Bentley S.D."/>
            <person name="Brooks K."/>
            <person name="Cerdeno-Tarraga A.-M."/>
            <person name="Chillingworth T."/>
            <person name="Cronin A."/>
            <person name="Davies R.M."/>
            <person name="Davis P."/>
            <person name="Dougan G."/>
            <person name="Feltwell T."/>
            <person name="Hamlin N."/>
            <person name="Holroyd S."/>
            <person name="Jagels K."/>
            <person name="Karlyshev A.V."/>
            <person name="Leather S."/>
            <person name="Moule S."/>
            <person name="Oyston P.C.F."/>
            <person name="Quail M.A."/>
            <person name="Rutherford K.M."/>
            <person name="Simmonds M."/>
            <person name="Skelton J."/>
            <person name="Stevens K."/>
            <person name="Whitehead S."/>
            <person name="Barrell B.G."/>
        </authorList>
    </citation>
    <scope>NUCLEOTIDE SEQUENCE [LARGE SCALE GENOMIC DNA]</scope>
    <source>
        <strain>CO-92 / Biovar Orientalis</strain>
    </source>
</reference>
<reference key="2">
    <citation type="journal article" date="2002" name="J. Bacteriol.">
        <title>Genome sequence of Yersinia pestis KIM.</title>
        <authorList>
            <person name="Deng W."/>
            <person name="Burland V."/>
            <person name="Plunkett G. III"/>
            <person name="Boutin A."/>
            <person name="Mayhew G.F."/>
            <person name="Liss P."/>
            <person name="Perna N.T."/>
            <person name="Rose D.J."/>
            <person name="Mau B."/>
            <person name="Zhou S."/>
            <person name="Schwartz D.C."/>
            <person name="Fetherston J.D."/>
            <person name="Lindler L.E."/>
            <person name="Brubaker R.R."/>
            <person name="Plano G.V."/>
            <person name="Straley S.C."/>
            <person name="McDonough K.A."/>
            <person name="Nilles M.L."/>
            <person name="Matson J.S."/>
            <person name="Blattner F.R."/>
            <person name="Perry R.D."/>
        </authorList>
    </citation>
    <scope>NUCLEOTIDE SEQUENCE [LARGE SCALE GENOMIC DNA]</scope>
    <source>
        <strain>KIM10+ / Biovar Mediaevalis</strain>
    </source>
</reference>
<reference key="3">
    <citation type="journal article" date="2004" name="DNA Res.">
        <title>Complete genome sequence of Yersinia pestis strain 91001, an isolate avirulent to humans.</title>
        <authorList>
            <person name="Song Y."/>
            <person name="Tong Z."/>
            <person name="Wang J."/>
            <person name="Wang L."/>
            <person name="Guo Z."/>
            <person name="Han Y."/>
            <person name="Zhang J."/>
            <person name="Pei D."/>
            <person name="Zhou D."/>
            <person name="Qin H."/>
            <person name="Pang X."/>
            <person name="Han Y."/>
            <person name="Zhai J."/>
            <person name="Li M."/>
            <person name="Cui B."/>
            <person name="Qi Z."/>
            <person name="Jin L."/>
            <person name="Dai R."/>
            <person name="Chen F."/>
            <person name="Li S."/>
            <person name="Ye C."/>
            <person name="Du Z."/>
            <person name="Lin W."/>
            <person name="Wang J."/>
            <person name="Yu J."/>
            <person name="Yang H."/>
            <person name="Wang J."/>
            <person name="Huang P."/>
            <person name="Yang R."/>
        </authorList>
    </citation>
    <scope>NUCLEOTIDE SEQUENCE [LARGE SCALE GENOMIC DNA]</scope>
    <source>
        <strain>91001 / Biovar Mediaevalis</strain>
    </source>
</reference>
<accession>Q8ZIF1</accession>
<accession>Q0WJB4</accession>
<protein>
    <recommendedName>
        <fullName evidence="1">UDP-N-acetylmuramoylalanine--D-glutamate ligase</fullName>
        <ecNumber evidence="1">6.3.2.9</ecNumber>
    </recommendedName>
    <alternativeName>
        <fullName evidence="1">D-glutamic acid-adding enzyme</fullName>
    </alternativeName>
    <alternativeName>
        <fullName evidence="1">UDP-N-acetylmuramoyl-L-alanyl-D-glutamate synthetase</fullName>
    </alternativeName>
</protein>
<sequence>MVDYQGKKVVIIGLGLTGLSCVDFFIARGVTPRVMDTRINPPGLDQLPESVEQHVGDLNQEWLLDADLIVVSPGMALAHPALSEAAEAGVEIIGDIELFCRENQAPVVAITGSNGKSTVTTLVGEMAKAAGWSVGGGGNIGVPALTLLKQDNQLTVLELSSFQLETTHSLRASAATILNVTEDHTDRYPLGLQQYRAAKLRVYENAKVCVVNADDALTMPVRGADSRCISFGVDVGDYHLNKQQGEIWLRVRGEKVLNTREMKLSGRHNYTNALAALALADAVGIPRASSLKALTTFSGLPHRFQLVLERHGVRWINDSKATNVGSTEAALDGLQVDGTLHLLLGGDGKSADFSGLTHFLQGDRIKVYCFGRDGGQLAALRPDVSQLTETMAQAMALVAKVVLPGDRVLLSPACASLDQFRSFEHRGNEFARLAEELG</sequence>
<evidence type="ECO:0000255" key="1">
    <source>
        <dbReference type="HAMAP-Rule" id="MF_00639"/>
    </source>
</evidence>
<organism>
    <name type="scientific">Yersinia pestis</name>
    <dbReference type="NCBI Taxonomy" id="632"/>
    <lineage>
        <taxon>Bacteria</taxon>
        <taxon>Pseudomonadati</taxon>
        <taxon>Pseudomonadota</taxon>
        <taxon>Gammaproteobacteria</taxon>
        <taxon>Enterobacterales</taxon>
        <taxon>Yersiniaceae</taxon>
        <taxon>Yersinia</taxon>
    </lineage>
</organism>
<proteinExistence type="inferred from homology"/>